<sequence length="209" mass="23189">MTAKKRSASSTRWMQEHFDDHYVKLAQKRGLRSRAAFKLEELQEKDHLIKPGMTVVDLGAAPGGWSQVAVKLVGDRGKVIACDILPMDPIVGVDFLQGDFREDAVLNALLERVGDEKVDVVLSDMAPNMSGSDGVDQPRAMYLVELALDMCHQVLAPNGSFAVKVFQGEGFDEYMKAVREAFKVVKTRKPDSSRARSREVYLVATGYKL</sequence>
<name>RLME_SHEAM</name>
<dbReference type="EC" id="2.1.1.166" evidence="1"/>
<dbReference type="EMBL" id="CP000507">
    <property type="protein sequence ID" value="ABL99160.1"/>
    <property type="molecule type" value="Genomic_DNA"/>
</dbReference>
<dbReference type="RefSeq" id="WP_011759069.1">
    <property type="nucleotide sequence ID" value="NC_008700.1"/>
</dbReference>
<dbReference type="SMR" id="A1S454"/>
<dbReference type="STRING" id="326297.Sama_0953"/>
<dbReference type="KEGG" id="saz:Sama_0953"/>
<dbReference type="eggNOG" id="COG0293">
    <property type="taxonomic scope" value="Bacteria"/>
</dbReference>
<dbReference type="HOGENOM" id="CLU_009422_4_0_6"/>
<dbReference type="OrthoDB" id="9790080at2"/>
<dbReference type="Proteomes" id="UP000009175">
    <property type="component" value="Chromosome"/>
</dbReference>
<dbReference type="GO" id="GO:0005737">
    <property type="term" value="C:cytoplasm"/>
    <property type="evidence" value="ECO:0007669"/>
    <property type="project" value="UniProtKB-SubCell"/>
</dbReference>
<dbReference type="GO" id="GO:0008650">
    <property type="term" value="F:rRNA (uridine-2'-O-)-methyltransferase activity"/>
    <property type="evidence" value="ECO:0007669"/>
    <property type="project" value="UniProtKB-UniRule"/>
</dbReference>
<dbReference type="CDD" id="cd02440">
    <property type="entry name" value="AdoMet_MTases"/>
    <property type="match status" value="1"/>
</dbReference>
<dbReference type="FunFam" id="3.40.50.150:FF:000005">
    <property type="entry name" value="Ribosomal RNA large subunit methyltransferase E"/>
    <property type="match status" value="1"/>
</dbReference>
<dbReference type="Gene3D" id="3.40.50.150">
    <property type="entry name" value="Vaccinia Virus protein VP39"/>
    <property type="match status" value="1"/>
</dbReference>
<dbReference type="HAMAP" id="MF_01547">
    <property type="entry name" value="RNA_methyltr_E"/>
    <property type="match status" value="1"/>
</dbReference>
<dbReference type="InterPro" id="IPR050082">
    <property type="entry name" value="RNA_methyltr_RlmE"/>
</dbReference>
<dbReference type="InterPro" id="IPR002877">
    <property type="entry name" value="RNA_MeTrfase_FtsJ_dom"/>
</dbReference>
<dbReference type="InterPro" id="IPR015507">
    <property type="entry name" value="rRNA-MeTfrase_E"/>
</dbReference>
<dbReference type="InterPro" id="IPR029063">
    <property type="entry name" value="SAM-dependent_MTases_sf"/>
</dbReference>
<dbReference type="NCBIfam" id="NF008390">
    <property type="entry name" value="PRK11188.1"/>
    <property type="match status" value="1"/>
</dbReference>
<dbReference type="PANTHER" id="PTHR10920">
    <property type="entry name" value="RIBOSOMAL RNA METHYLTRANSFERASE"/>
    <property type="match status" value="1"/>
</dbReference>
<dbReference type="PANTHER" id="PTHR10920:SF18">
    <property type="entry name" value="RRNA METHYLTRANSFERASE 2, MITOCHONDRIAL"/>
    <property type="match status" value="1"/>
</dbReference>
<dbReference type="Pfam" id="PF01728">
    <property type="entry name" value="FtsJ"/>
    <property type="match status" value="1"/>
</dbReference>
<dbReference type="PIRSF" id="PIRSF005461">
    <property type="entry name" value="23S_rRNA_mtase"/>
    <property type="match status" value="1"/>
</dbReference>
<dbReference type="SUPFAM" id="SSF53335">
    <property type="entry name" value="S-adenosyl-L-methionine-dependent methyltransferases"/>
    <property type="match status" value="1"/>
</dbReference>
<evidence type="ECO:0000255" key="1">
    <source>
        <dbReference type="HAMAP-Rule" id="MF_01547"/>
    </source>
</evidence>
<feature type="chain" id="PRO_0000282794" description="Ribosomal RNA large subunit methyltransferase E">
    <location>
        <begin position="1"/>
        <end position="209"/>
    </location>
</feature>
<feature type="active site" description="Proton acceptor" evidence="1">
    <location>
        <position position="164"/>
    </location>
</feature>
<feature type="binding site" evidence="1">
    <location>
        <position position="63"/>
    </location>
    <ligand>
        <name>S-adenosyl-L-methionine</name>
        <dbReference type="ChEBI" id="CHEBI:59789"/>
    </ligand>
</feature>
<feature type="binding site" evidence="1">
    <location>
        <position position="65"/>
    </location>
    <ligand>
        <name>S-adenosyl-L-methionine</name>
        <dbReference type="ChEBI" id="CHEBI:59789"/>
    </ligand>
</feature>
<feature type="binding site" evidence="1">
    <location>
        <position position="83"/>
    </location>
    <ligand>
        <name>S-adenosyl-L-methionine</name>
        <dbReference type="ChEBI" id="CHEBI:59789"/>
    </ligand>
</feature>
<feature type="binding site" evidence="1">
    <location>
        <position position="99"/>
    </location>
    <ligand>
        <name>S-adenosyl-L-methionine</name>
        <dbReference type="ChEBI" id="CHEBI:59789"/>
    </ligand>
</feature>
<feature type="binding site" evidence="1">
    <location>
        <position position="124"/>
    </location>
    <ligand>
        <name>S-adenosyl-L-methionine</name>
        <dbReference type="ChEBI" id="CHEBI:59789"/>
    </ligand>
</feature>
<keyword id="KW-0963">Cytoplasm</keyword>
<keyword id="KW-0489">Methyltransferase</keyword>
<keyword id="KW-1185">Reference proteome</keyword>
<keyword id="KW-0698">rRNA processing</keyword>
<keyword id="KW-0949">S-adenosyl-L-methionine</keyword>
<keyword id="KW-0808">Transferase</keyword>
<gene>
    <name evidence="1" type="primary">rlmE</name>
    <name evidence="1" type="synonym">ftsJ</name>
    <name evidence="1" type="synonym">rrmJ</name>
    <name type="ordered locus">Sama_0953</name>
</gene>
<organism>
    <name type="scientific">Shewanella amazonensis (strain ATCC BAA-1098 / SB2B)</name>
    <dbReference type="NCBI Taxonomy" id="326297"/>
    <lineage>
        <taxon>Bacteria</taxon>
        <taxon>Pseudomonadati</taxon>
        <taxon>Pseudomonadota</taxon>
        <taxon>Gammaproteobacteria</taxon>
        <taxon>Alteromonadales</taxon>
        <taxon>Shewanellaceae</taxon>
        <taxon>Shewanella</taxon>
    </lineage>
</organism>
<protein>
    <recommendedName>
        <fullName evidence="1">Ribosomal RNA large subunit methyltransferase E</fullName>
        <ecNumber evidence="1">2.1.1.166</ecNumber>
    </recommendedName>
    <alternativeName>
        <fullName evidence="1">23S rRNA Um2552 methyltransferase</fullName>
    </alternativeName>
    <alternativeName>
        <fullName evidence="1">rRNA (uridine-2'-O-)-methyltransferase</fullName>
    </alternativeName>
</protein>
<reference key="1">
    <citation type="submission" date="2006-12" db="EMBL/GenBank/DDBJ databases">
        <title>Complete sequence of Shewanella amazonensis SB2B.</title>
        <authorList>
            <consortium name="US DOE Joint Genome Institute"/>
            <person name="Copeland A."/>
            <person name="Lucas S."/>
            <person name="Lapidus A."/>
            <person name="Barry K."/>
            <person name="Detter J.C."/>
            <person name="Glavina del Rio T."/>
            <person name="Hammon N."/>
            <person name="Israni S."/>
            <person name="Dalin E."/>
            <person name="Tice H."/>
            <person name="Pitluck S."/>
            <person name="Munk A.C."/>
            <person name="Brettin T."/>
            <person name="Bruce D."/>
            <person name="Han C."/>
            <person name="Tapia R."/>
            <person name="Gilna P."/>
            <person name="Schmutz J."/>
            <person name="Larimer F."/>
            <person name="Land M."/>
            <person name="Hauser L."/>
            <person name="Kyrpides N."/>
            <person name="Mikhailova N."/>
            <person name="Fredrickson J."/>
            <person name="Richardson P."/>
        </authorList>
    </citation>
    <scope>NUCLEOTIDE SEQUENCE [LARGE SCALE GENOMIC DNA]</scope>
    <source>
        <strain>ATCC BAA-1098 / SB2B</strain>
    </source>
</reference>
<accession>A1S454</accession>
<comment type="function">
    <text evidence="1">Specifically methylates the uridine in position 2552 of 23S rRNA at the 2'-O position of the ribose in the fully assembled 50S ribosomal subunit.</text>
</comment>
<comment type="catalytic activity">
    <reaction evidence="1">
        <text>uridine(2552) in 23S rRNA + S-adenosyl-L-methionine = 2'-O-methyluridine(2552) in 23S rRNA + S-adenosyl-L-homocysteine + H(+)</text>
        <dbReference type="Rhea" id="RHEA:42720"/>
        <dbReference type="Rhea" id="RHEA-COMP:10202"/>
        <dbReference type="Rhea" id="RHEA-COMP:10203"/>
        <dbReference type="ChEBI" id="CHEBI:15378"/>
        <dbReference type="ChEBI" id="CHEBI:57856"/>
        <dbReference type="ChEBI" id="CHEBI:59789"/>
        <dbReference type="ChEBI" id="CHEBI:65315"/>
        <dbReference type="ChEBI" id="CHEBI:74478"/>
        <dbReference type="EC" id="2.1.1.166"/>
    </reaction>
</comment>
<comment type="subcellular location">
    <subcellularLocation>
        <location evidence="1">Cytoplasm</location>
    </subcellularLocation>
</comment>
<comment type="similarity">
    <text evidence="1">Belongs to the class I-like SAM-binding methyltransferase superfamily. RNA methyltransferase RlmE family.</text>
</comment>
<proteinExistence type="inferred from homology"/>